<accession>Q0VSN1</accession>
<protein>
    <recommendedName>
        <fullName evidence="1">Type III pantothenate kinase</fullName>
        <ecNumber evidence="1">2.7.1.33</ecNumber>
    </recommendedName>
    <alternativeName>
        <fullName evidence="1">PanK-III</fullName>
    </alternativeName>
    <alternativeName>
        <fullName evidence="1">Pantothenic acid kinase</fullName>
    </alternativeName>
</protein>
<keyword id="KW-0067">ATP-binding</keyword>
<keyword id="KW-0173">Coenzyme A biosynthesis</keyword>
<keyword id="KW-0963">Cytoplasm</keyword>
<keyword id="KW-0418">Kinase</keyword>
<keyword id="KW-0479">Metal-binding</keyword>
<keyword id="KW-0547">Nucleotide-binding</keyword>
<keyword id="KW-0630">Potassium</keyword>
<keyword id="KW-1185">Reference proteome</keyword>
<keyword id="KW-0808">Transferase</keyword>
<name>COAX_ALCBS</name>
<comment type="function">
    <text evidence="1">Catalyzes the phosphorylation of pantothenate (Pan), the first step in CoA biosynthesis.</text>
</comment>
<comment type="catalytic activity">
    <reaction evidence="1">
        <text>(R)-pantothenate + ATP = (R)-4'-phosphopantothenate + ADP + H(+)</text>
        <dbReference type="Rhea" id="RHEA:16373"/>
        <dbReference type="ChEBI" id="CHEBI:10986"/>
        <dbReference type="ChEBI" id="CHEBI:15378"/>
        <dbReference type="ChEBI" id="CHEBI:29032"/>
        <dbReference type="ChEBI" id="CHEBI:30616"/>
        <dbReference type="ChEBI" id="CHEBI:456216"/>
        <dbReference type="EC" id="2.7.1.33"/>
    </reaction>
</comment>
<comment type="cofactor">
    <cofactor evidence="1">
        <name>NH4(+)</name>
        <dbReference type="ChEBI" id="CHEBI:28938"/>
    </cofactor>
    <cofactor evidence="1">
        <name>K(+)</name>
        <dbReference type="ChEBI" id="CHEBI:29103"/>
    </cofactor>
    <text evidence="1">A monovalent cation. Ammonium or potassium.</text>
</comment>
<comment type="pathway">
    <text evidence="1">Cofactor biosynthesis; coenzyme A biosynthesis; CoA from (R)-pantothenate: step 1/5.</text>
</comment>
<comment type="subunit">
    <text evidence="1">Homodimer.</text>
</comment>
<comment type="subcellular location">
    <subcellularLocation>
        <location evidence="1">Cytoplasm</location>
    </subcellularLocation>
</comment>
<comment type="similarity">
    <text evidence="1">Belongs to the type III pantothenate kinase family.</text>
</comment>
<gene>
    <name evidence="1" type="primary">coaX</name>
    <name type="ordered locus">ABO_0369</name>
</gene>
<sequence>MMLFVDVGNTAMKWRYRDGDVIHQGGGRHEREWSRVVELMLRSLVGMPSEIWVASVAGPEADETIAYYLKEAIRCEPHFYYSCQSDFGVESCYPEPRKLGVDRWVAMIEGFQRYGASIIIDCGSALTIDAVDSRGTFLGGYIVPGLGMLRGALLRDTSDVHIEPGMAQLGLGRSTGECVHNGLLRMSVAFVTEVVLELRQVLDDTCKVLVTGGDAPELIGAFTFEFLHAPDLVLDGLERVAARQQ</sequence>
<dbReference type="EC" id="2.7.1.33" evidence="1"/>
<dbReference type="EMBL" id="AM286690">
    <property type="protein sequence ID" value="CAL15817.1"/>
    <property type="molecule type" value="Genomic_DNA"/>
</dbReference>
<dbReference type="RefSeq" id="WP_011587664.1">
    <property type="nucleotide sequence ID" value="NC_008260.1"/>
</dbReference>
<dbReference type="SMR" id="Q0VSN1"/>
<dbReference type="STRING" id="393595.ABO_0369"/>
<dbReference type="KEGG" id="abo:ABO_0369"/>
<dbReference type="eggNOG" id="COG1521">
    <property type="taxonomic scope" value="Bacteria"/>
</dbReference>
<dbReference type="HOGENOM" id="CLU_066627_0_0_6"/>
<dbReference type="OrthoDB" id="9781305at2"/>
<dbReference type="UniPathway" id="UPA00241">
    <property type="reaction ID" value="UER00352"/>
</dbReference>
<dbReference type="Proteomes" id="UP000008871">
    <property type="component" value="Chromosome"/>
</dbReference>
<dbReference type="GO" id="GO:0005737">
    <property type="term" value="C:cytoplasm"/>
    <property type="evidence" value="ECO:0007669"/>
    <property type="project" value="UniProtKB-SubCell"/>
</dbReference>
<dbReference type="GO" id="GO:0005524">
    <property type="term" value="F:ATP binding"/>
    <property type="evidence" value="ECO:0007669"/>
    <property type="project" value="UniProtKB-UniRule"/>
</dbReference>
<dbReference type="GO" id="GO:0046872">
    <property type="term" value="F:metal ion binding"/>
    <property type="evidence" value="ECO:0007669"/>
    <property type="project" value="UniProtKB-KW"/>
</dbReference>
<dbReference type="GO" id="GO:0004594">
    <property type="term" value="F:pantothenate kinase activity"/>
    <property type="evidence" value="ECO:0007669"/>
    <property type="project" value="UniProtKB-UniRule"/>
</dbReference>
<dbReference type="GO" id="GO:0015937">
    <property type="term" value="P:coenzyme A biosynthetic process"/>
    <property type="evidence" value="ECO:0007669"/>
    <property type="project" value="UniProtKB-UniRule"/>
</dbReference>
<dbReference type="CDD" id="cd24015">
    <property type="entry name" value="ASKHA_NBD_PanK-III"/>
    <property type="match status" value="1"/>
</dbReference>
<dbReference type="Gene3D" id="3.30.420.40">
    <property type="match status" value="2"/>
</dbReference>
<dbReference type="HAMAP" id="MF_01274">
    <property type="entry name" value="Pantothen_kinase_3"/>
    <property type="match status" value="1"/>
</dbReference>
<dbReference type="InterPro" id="IPR043129">
    <property type="entry name" value="ATPase_NBD"/>
</dbReference>
<dbReference type="InterPro" id="IPR004619">
    <property type="entry name" value="Type_III_PanK"/>
</dbReference>
<dbReference type="NCBIfam" id="TIGR00671">
    <property type="entry name" value="baf"/>
    <property type="match status" value="1"/>
</dbReference>
<dbReference type="PANTHER" id="PTHR34265">
    <property type="entry name" value="TYPE III PANTOTHENATE KINASE"/>
    <property type="match status" value="1"/>
</dbReference>
<dbReference type="PANTHER" id="PTHR34265:SF1">
    <property type="entry name" value="TYPE III PANTOTHENATE KINASE"/>
    <property type="match status" value="1"/>
</dbReference>
<dbReference type="Pfam" id="PF03309">
    <property type="entry name" value="Pan_kinase"/>
    <property type="match status" value="1"/>
</dbReference>
<dbReference type="SUPFAM" id="SSF53067">
    <property type="entry name" value="Actin-like ATPase domain"/>
    <property type="match status" value="2"/>
</dbReference>
<evidence type="ECO:0000255" key="1">
    <source>
        <dbReference type="HAMAP-Rule" id="MF_01274"/>
    </source>
</evidence>
<reference key="1">
    <citation type="journal article" date="2006" name="Nat. Biotechnol.">
        <title>Genome sequence of the ubiquitous hydrocarbon-degrading marine bacterium Alcanivorax borkumensis.</title>
        <authorList>
            <person name="Schneiker S."/>
            <person name="Martins dos Santos V.A.P."/>
            <person name="Bartels D."/>
            <person name="Bekel T."/>
            <person name="Brecht M."/>
            <person name="Buhrmester J."/>
            <person name="Chernikova T.N."/>
            <person name="Denaro R."/>
            <person name="Ferrer M."/>
            <person name="Gertler C."/>
            <person name="Goesmann A."/>
            <person name="Golyshina O.V."/>
            <person name="Kaminski F."/>
            <person name="Khachane A.N."/>
            <person name="Lang S."/>
            <person name="Linke B."/>
            <person name="McHardy A.C."/>
            <person name="Meyer F."/>
            <person name="Nechitaylo T."/>
            <person name="Puehler A."/>
            <person name="Regenhardt D."/>
            <person name="Rupp O."/>
            <person name="Sabirova J.S."/>
            <person name="Selbitschka W."/>
            <person name="Yakimov M.M."/>
            <person name="Timmis K.N."/>
            <person name="Vorhoelter F.-J."/>
            <person name="Weidner S."/>
            <person name="Kaiser O."/>
            <person name="Golyshin P.N."/>
        </authorList>
    </citation>
    <scope>NUCLEOTIDE SEQUENCE [LARGE SCALE GENOMIC DNA]</scope>
    <source>
        <strain>ATCC 700651 / DSM 11573 / NCIMB 13689 / SK2</strain>
    </source>
</reference>
<organism>
    <name type="scientific">Alcanivorax borkumensis (strain ATCC 700651 / DSM 11573 / NCIMB 13689 / SK2)</name>
    <dbReference type="NCBI Taxonomy" id="393595"/>
    <lineage>
        <taxon>Bacteria</taxon>
        <taxon>Pseudomonadati</taxon>
        <taxon>Pseudomonadota</taxon>
        <taxon>Gammaproteobacteria</taxon>
        <taxon>Oceanospirillales</taxon>
        <taxon>Alcanivoracaceae</taxon>
        <taxon>Alcanivorax</taxon>
    </lineage>
</organism>
<feature type="chain" id="PRO_0000270855" description="Type III pantothenate kinase">
    <location>
        <begin position="1"/>
        <end position="245"/>
    </location>
</feature>
<feature type="active site" description="Proton acceptor" evidence="1">
    <location>
        <position position="102"/>
    </location>
</feature>
<feature type="binding site" evidence="1">
    <location>
        <begin position="6"/>
        <end position="13"/>
    </location>
    <ligand>
        <name>ATP</name>
        <dbReference type="ChEBI" id="CHEBI:30616"/>
    </ligand>
</feature>
<feature type="binding site" evidence="1">
    <location>
        <position position="93"/>
    </location>
    <ligand>
        <name>substrate</name>
    </ligand>
</feature>
<feature type="binding site" evidence="1">
    <location>
        <begin position="100"/>
        <end position="103"/>
    </location>
    <ligand>
        <name>substrate</name>
    </ligand>
</feature>
<feature type="binding site" evidence="1">
    <location>
        <position position="121"/>
    </location>
    <ligand>
        <name>K(+)</name>
        <dbReference type="ChEBI" id="CHEBI:29103"/>
    </ligand>
</feature>
<feature type="binding site" evidence="1">
    <location>
        <position position="124"/>
    </location>
    <ligand>
        <name>ATP</name>
        <dbReference type="ChEBI" id="CHEBI:30616"/>
    </ligand>
</feature>
<feature type="binding site" evidence="1">
    <location>
        <position position="175"/>
    </location>
    <ligand>
        <name>substrate</name>
    </ligand>
</feature>
<proteinExistence type="inferred from homology"/>